<proteinExistence type="evidence at transcript level"/>
<accession>P34920</accession>
<reference key="1">
    <citation type="journal article" date="1994" name="J. Mol. Evol.">
        <title>The evolutionary origin of red algae as deduced from the nuclear genes encoding cytosolic and chloroplast glyceraldehyde-3-phosphate dehydrogenases from Chondrus crispus.</title>
        <authorList>
            <person name="Liaud M.-F."/>
            <person name="Valentin C."/>
            <person name="Martin W."/>
            <person name="Bouget F.Y."/>
            <person name="Kloareg B."/>
            <person name="Cerff R."/>
        </authorList>
    </citation>
    <scope>NUCLEOTIDE SEQUENCE [GENOMIC DNA / MRNA]</scope>
    <source>
        <strain>Stackhouse</strain>
    </source>
</reference>
<name>G3PC_CHOCR</name>
<gene>
    <name type="primary">GAPC</name>
</gene>
<evidence type="ECO:0000250" key="1"/>
<evidence type="ECO:0000255" key="2">
    <source>
        <dbReference type="PROSITE-ProRule" id="PRU10009"/>
    </source>
</evidence>
<evidence type="ECO:0000305" key="3"/>
<sequence length="335" mass="36054">MTAPKVGINGFGRIGRLVLRAAIEKGTCQVVAINDPFIDLDYMAYMLKYDSTHGRYAGDVSIKDGKLQVDGNSITVFAHRDPAEIPWATAAADYIVEATGVFTLKDKAAAHFKGGAKKVVISAPSKDAPMFVCGVNEAKYTPDLDIISNASCTTNCLAPLVKVIHEKYGIEEGLMTTVHATTATQKTVDGPSNKDWRGGRGRGRNIIPSSTGAAKAVGKVMPELNGKLTGMAFRVPTPDVSVVDLTVRLASETTYEDIKATMKAAADDSMKGIMKYTEDAVVSTDFIHDDASCIFDASAGIMLNSKFCKLVAWYDNEWGYSNRVVDLIAHISKVQ</sequence>
<dbReference type="EC" id="1.2.1.12"/>
<dbReference type="EMBL" id="X73034">
    <property type="protein sequence ID" value="CAA51515.1"/>
    <property type="molecule type" value="mRNA"/>
</dbReference>
<dbReference type="EMBL" id="X73036">
    <property type="protein sequence ID" value="CAA51517.1"/>
    <property type="molecule type" value="Genomic_DNA"/>
</dbReference>
<dbReference type="PIR" id="S43339">
    <property type="entry name" value="S43339"/>
</dbReference>
<dbReference type="SMR" id="P34920"/>
<dbReference type="UniPathway" id="UPA00109">
    <property type="reaction ID" value="UER00184"/>
</dbReference>
<dbReference type="GO" id="GO:0005829">
    <property type="term" value="C:cytosol"/>
    <property type="evidence" value="ECO:0007669"/>
    <property type="project" value="TreeGrafter"/>
</dbReference>
<dbReference type="GO" id="GO:0004365">
    <property type="term" value="F:glyceraldehyde-3-phosphate dehydrogenase (NAD+) (phosphorylating) activity"/>
    <property type="evidence" value="ECO:0007669"/>
    <property type="project" value="UniProtKB-EC"/>
</dbReference>
<dbReference type="GO" id="GO:0051287">
    <property type="term" value="F:NAD binding"/>
    <property type="evidence" value="ECO:0007669"/>
    <property type="project" value="InterPro"/>
</dbReference>
<dbReference type="GO" id="GO:0050661">
    <property type="term" value="F:NADP binding"/>
    <property type="evidence" value="ECO:0007669"/>
    <property type="project" value="InterPro"/>
</dbReference>
<dbReference type="GO" id="GO:0006006">
    <property type="term" value="P:glucose metabolic process"/>
    <property type="evidence" value="ECO:0007669"/>
    <property type="project" value="InterPro"/>
</dbReference>
<dbReference type="GO" id="GO:0006096">
    <property type="term" value="P:glycolytic process"/>
    <property type="evidence" value="ECO:0007669"/>
    <property type="project" value="UniProtKB-UniPathway"/>
</dbReference>
<dbReference type="CDD" id="cd18126">
    <property type="entry name" value="GAPDH_I_C"/>
    <property type="match status" value="1"/>
</dbReference>
<dbReference type="CDD" id="cd05214">
    <property type="entry name" value="GAPDH_I_N"/>
    <property type="match status" value="1"/>
</dbReference>
<dbReference type="FunFam" id="3.30.360.10:FF:000001">
    <property type="entry name" value="Glyceraldehyde-3-phosphate dehydrogenase"/>
    <property type="match status" value="1"/>
</dbReference>
<dbReference type="FunFam" id="3.40.50.720:FF:000266">
    <property type="entry name" value="Glyceraldehyde-3-phosphate dehydrogenase"/>
    <property type="match status" value="1"/>
</dbReference>
<dbReference type="FunFam" id="3.40.50.720:FF:000636">
    <property type="entry name" value="Glyceraldehyde-3-phosphate dehydrogenase 2, cytosolic"/>
    <property type="match status" value="1"/>
</dbReference>
<dbReference type="Gene3D" id="3.30.360.10">
    <property type="entry name" value="Dihydrodipicolinate Reductase, domain 2"/>
    <property type="match status" value="1"/>
</dbReference>
<dbReference type="Gene3D" id="3.40.50.720">
    <property type="entry name" value="NAD(P)-binding Rossmann-like Domain"/>
    <property type="match status" value="1"/>
</dbReference>
<dbReference type="InterPro" id="IPR020831">
    <property type="entry name" value="GlycerAld/Erythrose_P_DH"/>
</dbReference>
<dbReference type="InterPro" id="IPR020830">
    <property type="entry name" value="GlycerAld_3-P_DH_AS"/>
</dbReference>
<dbReference type="InterPro" id="IPR020829">
    <property type="entry name" value="GlycerAld_3-P_DH_cat"/>
</dbReference>
<dbReference type="InterPro" id="IPR020828">
    <property type="entry name" value="GlycerAld_3-P_DH_NAD(P)-bd"/>
</dbReference>
<dbReference type="InterPro" id="IPR006424">
    <property type="entry name" value="Glyceraldehyde-3-P_DH_1"/>
</dbReference>
<dbReference type="InterPro" id="IPR036291">
    <property type="entry name" value="NAD(P)-bd_dom_sf"/>
</dbReference>
<dbReference type="NCBIfam" id="TIGR01534">
    <property type="entry name" value="GAPDH-I"/>
    <property type="match status" value="1"/>
</dbReference>
<dbReference type="PANTHER" id="PTHR10836">
    <property type="entry name" value="GLYCERALDEHYDE 3-PHOSPHATE DEHYDROGENASE"/>
    <property type="match status" value="1"/>
</dbReference>
<dbReference type="PANTHER" id="PTHR10836:SF76">
    <property type="entry name" value="GLYCERALDEHYDE-3-PHOSPHATE DEHYDROGENASE-RELATED"/>
    <property type="match status" value="1"/>
</dbReference>
<dbReference type="Pfam" id="PF02800">
    <property type="entry name" value="Gp_dh_C"/>
    <property type="match status" value="1"/>
</dbReference>
<dbReference type="Pfam" id="PF00044">
    <property type="entry name" value="Gp_dh_N"/>
    <property type="match status" value="1"/>
</dbReference>
<dbReference type="PIRSF" id="PIRSF000149">
    <property type="entry name" value="GAP_DH"/>
    <property type="match status" value="1"/>
</dbReference>
<dbReference type="PRINTS" id="PR00078">
    <property type="entry name" value="G3PDHDRGNASE"/>
</dbReference>
<dbReference type="SMART" id="SM00846">
    <property type="entry name" value="Gp_dh_N"/>
    <property type="match status" value="1"/>
</dbReference>
<dbReference type="SUPFAM" id="SSF55347">
    <property type="entry name" value="Glyceraldehyde-3-phosphate dehydrogenase-like, C-terminal domain"/>
    <property type="match status" value="1"/>
</dbReference>
<dbReference type="SUPFAM" id="SSF51735">
    <property type="entry name" value="NAD(P)-binding Rossmann-fold domains"/>
    <property type="match status" value="1"/>
</dbReference>
<dbReference type="PROSITE" id="PS00071">
    <property type="entry name" value="GAPDH"/>
    <property type="match status" value="1"/>
</dbReference>
<keyword id="KW-0963">Cytoplasm</keyword>
<keyword id="KW-0324">Glycolysis</keyword>
<keyword id="KW-0520">NAD</keyword>
<keyword id="KW-0560">Oxidoreductase</keyword>
<comment type="catalytic activity">
    <reaction evidence="2">
        <text>D-glyceraldehyde 3-phosphate + phosphate + NAD(+) = (2R)-3-phospho-glyceroyl phosphate + NADH + H(+)</text>
        <dbReference type="Rhea" id="RHEA:10300"/>
        <dbReference type="ChEBI" id="CHEBI:15378"/>
        <dbReference type="ChEBI" id="CHEBI:43474"/>
        <dbReference type="ChEBI" id="CHEBI:57540"/>
        <dbReference type="ChEBI" id="CHEBI:57604"/>
        <dbReference type="ChEBI" id="CHEBI:57945"/>
        <dbReference type="ChEBI" id="CHEBI:59776"/>
        <dbReference type="EC" id="1.2.1.12"/>
    </reaction>
</comment>
<comment type="pathway">
    <text>Carbohydrate degradation; glycolysis; pyruvate from D-glyceraldehyde 3-phosphate: step 1/5.</text>
</comment>
<comment type="subunit">
    <text>Homotetramer.</text>
</comment>
<comment type="subcellular location">
    <subcellularLocation>
        <location>Cytoplasm</location>
    </subcellularLocation>
</comment>
<comment type="similarity">
    <text evidence="3">Belongs to the glyceraldehyde-3-phosphate dehydrogenase family.</text>
</comment>
<feature type="chain" id="PRO_0000145597" description="Glyceraldehyde-3-phosphate dehydrogenase, cytosolic">
    <location>
        <begin position="1"/>
        <end position="335"/>
    </location>
</feature>
<feature type="active site" description="Nucleophile" evidence="2">
    <location>
        <position position="152"/>
    </location>
</feature>
<feature type="binding site" evidence="1">
    <location>
        <begin position="13"/>
        <end position="14"/>
    </location>
    <ligand>
        <name>NAD(+)</name>
        <dbReference type="ChEBI" id="CHEBI:57540"/>
    </ligand>
</feature>
<feature type="binding site" evidence="1">
    <location>
        <position position="35"/>
    </location>
    <ligand>
        <name>NAD(+)</name>
        <dbReference type="ChEBI" id="CHEBI:57540"/>
    </ligand>
</feature>
<feature type="binding site" evidence="1">
    <location>
        <position position="80"/>
    </location>
    <ligand>
        <name>NAD(+)</name>
        <dbReference type="ChEBI" id="CHEBI:57540"/>
    </ligand>
</feature>
<feature type="binding site" evidence="1">
    <location>
        <begin position="151"/>
        <end position="153"/>
    </location>
    <ligand>
        <name>D-glyceraldehyde 3-phosphate</name>
        <dbReference type="ChEBI" id="CHEBI:59776"/>
    </ligand>
</feature>
<feature type="binding site" evidence="1">
    <location>
        <position position="182"/>
    </location>
    <ligand>
        <name>D-glyceraldehyde 3-phosphate</name>
        <dbReference type="ChEBI" id="CHEBI:59776"/>
    </ligand>
</feature>
<feature type="binding site" evidence="1">
    <location>
        <begin position="211"/>
        <end position="212"/>
    </location>
    <ligand>
        <name>D-glyceraldehyde 3-phosphate</name>
        <dbReference type="ChEBI" id="CHEBI:59776"/>
    </ligand>
</feature>
<feature type="binding site" evidence="1">
    <location>
        <position position="234"/>
    </location>
    <ligand>
        <name>D-glyceraldehyde 3-phosphate</name>
        <dbReference type="ChEBI" id="CHEBI:59776"/>
    </ligand>
</feature>
<feature type="binding site" evidence="1">
    <location>
        <position position="316"/>
    </location>
    <ligand>
        <name>NAD(+)</name>
        <dbReference type="ChEBI" id="CHEBI:57540"/>
    </ligand>
</feature>
<feature type="site" description="Activates thiol group during catalysis" evidence="1">
    <location>
        <position position="179"/>
    </location>
</feature>
<feature type="sequence conflict" description="In Ref. 1; CAA51517." evidence="3" ref="1">
    <original>A</original>
    <variation>T</variation>
    <location>
        <position position="250"/>
    </location>
</feature>
<protein>
    <recommendedName>
        <fullName>Glyceraldehyde-3-phosphate dehydrogenase, cytosolic</fullName>
        <ecNumber>1.2.1.12</ecNumber>
    </recommendedName>
</protein>
<organism>
    <name type="scientific">Chondrus crispus</name>
    <name type="common">Carrageen Irish moss</name>
    <name type="synonym">Polymorpha crispa</name>
    <dbReference type="NCBI Taxonomy" id="2769"/>
    <lineage>
        <taxon>Eukaryota</taxon>
        <taxon>Rhodophyta</taxon>
        <taxon>Florideophyceae</taxon>
        <taxon>Rhodymeniophycidae</taxon>
        <taxon>Gigartinales</taxon>
        <taxon>Gigartinaceae</taxon>
        <taxon>Chondrus</taxon>
    </lineage>
</organism>